<gene>
    <name evidence="1" type="primary">tsaC</name>
    <name type="synonym">rimN</name>
    <name type="ordered locus">HCH_00033</name>
</gene>
<dbReference type="EC" id="2.7.7.87" evidence="1"/>
<dbReference type="EMBL" id="CP000155">
    <property type="protein sequence ID" value="ABC26956.1"/>
    <property type="molecule type" value="Genomic_DNA"/>
</dbReference>
<dbReference type="RefSeq" id="WP_011394033.1">
    <property type="nucleotide sequence ID" value="NC_007645.1"/>
</dbReference>
<dbReference type="SMR" id="Q2SQW8"/>
<dbReference type="STRING" id="349521.HCH_00033"/>
<dbReference type="KEGG" id="hch:HCH_00033"/>
<dbReference type="eggNOG" id="COG0009">
    <property type="taxonomic scope" value="Bacteria"/>
</dbReference>
<dbReference type="HOGENOM" id="CLU_031397_6_0_6"/>
<dbReference type="OrthoDB" id="9814580at2"/>
<dbReference type="Proteomes" id="UP000000238">
    <property type="component" value="Chromosome"/>
</dbReference>
<dbReference type="GO" id="GO:0005737">
    <property type="term" value="C:cytoplasm"/>
    <property type="evidence" value="ECO:0007669"/>
    <property type="project" value="UniProtKB-SubCell"/>
</dbReference>
<dbReference type="GO" id="GO:0005524">
    <property type="term" value="F:ATP binding"/>
    <property type="evidence" value="ECO:0007669"/>
    <property type="project" value="UniProtKB-UniRule"/>
</dbReference>
<dbReference type="GO" id="GO:0003725">
    <property type="term" value="F:double-stranded RNA binding"/>
    <property type="evidence" value="ECO:0007669"/>
    <property type="project" value="InterPro"/>
</dbReference>
<dbReference type="GO" id="GO:0061710">
    <property type="term" value="F:L-threonylcarbamoyladenylate synthase"/>
    <property type="evidence" value="ECO:0007669"/>
    <property type="project" value="UniProtKB-EC"/>
</dbReference>
<dbReference type="GO" id="GO:0000049">
    <property type="term" value="F:tRNA binding"/>
    <property type="evidence" value="ECO:0007669"/>
    <property type="project" value="TreeGrafter"/>
</dbReference>
<dbReference type="GO" id="GO:0006450">
    <property type="term" value="P:regulation of translational fidelity"/>
    <property type="evidence" value="ECO:0007669"/>
    <property type="project" value="TreeGrafter"/>
</dbReference>
<dbReference type="GO" id="GO:0002949">
    <property type="term" value="P:tRNA threonylcarbamoyladenosine modification"/>
    <property type="evidence" value="ECO:0007669"/>
    <property type="project" value="UniProtKB-UniRule"/>
</dbReference>
<dbReference type="Gene3D" id="3.90.870.10">
    <property type="entry name" value="DHBP synthase"/>
    <property type="match status" value="1"/>
</dbReference>
<dbReference type="HAMAP" id="MF_01852">
    <property type="entry name" value="TsaC"/>
    <property type="match status" value="1"/>
</dbReference>
<dbReference type="InterPro" id="IPR017945">
    <property type="entry name" value="DHBP_synth_RibB-like_a/b_dom"/>
</dbReference>
<dbReference type="InterPro" id="IPR006070">
    <property type="entry name" value="Sua5-like_dom"/>
</dbReference>
<dbReference type="InterPro" id="IPR023535">
    <property type="entry name" value="TC-AMP_synthase"/>
</dbReference>
<dbReference type="InterPro" id="IPR050156">
    <property type="entry name" value="TC-AMP_synthase_SUA5"/>
</dbReference>
<dbReference type="PANTHER" id="PTHR17490">
    <property type="entry name" value="SUA5"/>
    <property type="match status" value="1"/>
</dbReference>
<dbReference type="PANTHER" id="PTHR17490:SF18">
    <property type="entry name" value="THREONYLCARBAMOYL-AMP SYNTHASE"/>
    <property type="match status" value="1"/>
</dbReference>
<dbReference type="Pfam" id="PF01300">
    <property type="entry name" value="Sua5_yciO_yrdC"/>
    <property type="match status" value="1"/>
</dbReference>
<dbReference type="SUPFAM" id="SSF55821">
    <property type="entry name" value="YrdC/RibB"/>
    <property type="match status" value="1"/>
</dbReference>
<dbReference type="PROSITE" id="PS51163">
    <property type="entry name" value="YRDC"/>
    <property type="match status" value="1"/>
</dbReference>
<accession>Q2SQW8</accession>
<keyword id="KW-0067">ATP-binding</keyword>
<keyword id="KW-0963">Cytoplasm</keyword>
<keyword id="KW-0547">Nucleotide-binding</keyword>
<keyword id="KW-0548">Nucleotidyltransferase</keyword>
<keyword id="KW-1185">Reference proteome</keyword>
<keyword id="KW-0808">Transferase</keyword>
<keyword id="KW-0819">tRNA processing</keyword>
<name>TSAC_HAHCH</name>
<protein>
    <recommendedName>
        <fullName evidence="1">Threonylcarbamoyl-AMP synthase</fullName>
        <shortName evidence="1">TC-AMP synthase</shortName>
        <ecNumber evidence="1">2.7.7.87</ecNumber>
    </recommendedName>
    <alternativeName>
        <fullName evidence="1">L-threonylcarbamoyladenylate synthase</fullName>
    </alternativeName>
    <alternativeName>
        <fullName evidence="1">t(6)A37 threonylcarbamoyladenosine biosynthesis protein TsaC</fullName>
    </alternativeName>
    <alternativeName>
        <fullName evidence="1">tRNA threonylcarbamoyladenosine biosynthesis protein TsaC</fullName>
    </alternativeName>
</protein>
<evidence type="ECO:0000255" key="1">
    <source>
        <dbReference type="HAMAP-Rule" id="MF_01852"/>
    </source>
</evidence>
<feature type="chain" id="PRO_0000352928" description="Threonylcarbamoyl-AMP synthase">
    <location>
        <begin position="1"/>
        <end position="184"/>
    </location>
</feature>
<feature type="domain" description="YrdC-like" evidence="1">
    <location>
        <begin position="3"/>
        <end position="184"/>
    </location>
</feature>
<organism>
    <name type="scientific">Hahella chejuensis (strain KCTC 2396)</name>
    <dbReference type="NCBI Taxonomy" id="349521"/>
    <lineage>
        <taxon>Bacteria</taxon>
        <taxon>Pseudomonadati</taxon>
        <taxon>Pseudomonadota</taxon>
        <taxon>Gammaproteobacteria</taxon>
        <taxon>Oceanospirillales</taxon>
        <taxon>Hahellaceae</taxon>
        <taxon>Hahella</taxon>
    </lineage>
</organism>
<reference key="1">
    <citation type="journal article" date="2005" name="Nucleic Acids Res.">
        <title>Genomic blueprint of Hahella chejuensis, a marine microbe producing an algicidal agent.</title>
        <authorList>
            <person name="Jeong H."/>
            <person name="Yim J.H."/>
            <person name="Lee C."/>
            <person name="Choi S.-H."/>
            <person name="Park Y.K."/>
            <person name="Yoon S.H."/>
            <person name="Hur C.-G."/>
            <person name="Kang H.-Y."/>
            <person name="Kim D."/>
            <person name="Lee H.H."/>
            <person name="Park K.H."/>
            <person name="Park S.-H."/>
            <person name="Park H.-S."/>
            <person name="Lee H.K."/>
            <person name="Oh T.K."/>
            <person name="Kim J.F."/>
        </authorList>
    </citation>
    <scope>NUCLEOTIDE SEQUENCE [LARGE SCALE GENOMIC DNA]</scope>
    <source>
        <strain>KCTC 2396</strain>
    </source>
</reference>
<sequence>MSAWFIQKAVSVLSRGGVLAYPTEAVWGLGCDPSCEDAVNRILQLKRRPWRKGLILVSGQIEHFSQLLDRLPQQQKDQILATWPGPVTWVVPDPGVYAPLVRGAHDAIAIRVTAHPLVVELTKAFGGPIVSTSANPATREPARTLFDCRRYFKSGVDHYLPGKLSGLSKPSQIRDAATGAILRQ</sequence>
<comment type="function">
    <text evidence="1">Required for the formation of a threonylcarbamoyl group on adenosine at position 37 (t(6)A37) in tRNAs that read codons beginning with adenine. Catalyzes the conversion of L-threonine, HCO(3)(-)/CO(2) and ATP to give threonylcarbamoyl-AMP (TC-AMP) as the acyladenylate intermediate, with the release of diphosphate.</text>
</comment>
<comment type="catalytic activity">
    <reaction evidence="1">
        <text>L-threonine + hydrogencarbonate + ATP = L-threonylcarbamoyladenylate + diphosphate + H2O</text>
        <dbReference type="Rhea" id="RHEA:36407"/>
        <dbReference type="ChEBI" id="CHEBI:15377"/>
        <dbReference type="ChEBI" id="CHEBI:17544"/>
        <dbReference type="ChEBI" id="CHEBI:30616"/>
        <dbReference type="ChEBI" id="CHEBI:33019"/>
        <dbReference type="ChEBI" id="CHEBI:57926"/>
        <dbReference type="ChEBI" id="CHEBI:73682"/>
        <dbReference type="EC" id="2.7.7.87"/>
    </reaction>
</comment>
<comment type="subcellular location">
    <subcellularLocation>
        <location evidence="1">Cytoplasm</location>
    </subcellularLocation>
</comment>
<comment type="similarity">
    <text evidence="1">Belongs to the SUA5 family. TsaC subfamily.</text>
</comment>
<proteinExistence type="inferred from homology"/>